<reference key="1">
    <citation type="journal article" date="2009" name="PLoS ONE">
        <title>Salmonella paratyphi C: genetic divergence from Salmonella choleraesuis and pathogenic convergence with Salmonella typhi.</title>
        <authorList>
            <person name="Liu W.-Q."/>
            <person name="Feng Y."/>
            <person name="Wang Y."/>
            <person name="Zou Q.-H."/>
            <person name="Chen F."/>
            <person name="Guo J.-T."/>
            <person name="Peng Y.-H."/>
            <person name="Jin Y."/>
            <person name="Li Y.-G."/>
            <person name="Hu S.-N."/>
            <person name="Johnston R.N."/>
            <person name="Liu G.-R."/>
            <person name="Liu S.-L."/>
        </authorList>
    </citation>
    <scope>NUCLEOTIDE SEQUENCE [LARGE SCALE GENOMIC DNA]</scope>
    <source>
        <strain>RKS4594</strain>
    </source>
</reference>
<feature type="chain" id="PRO_1000117787" description="2-dehydro-3-deoxyphosphooctonate aldolase">
    <location>
        <begin position="1"/>
        <end position="284"/>
    </location>
</feature>
<comment type="catalytic activity">
    <reaction evidence="1">
        <text>D-arabinose 5-phosphate + phosphoenolpyruvate + H2O = 3-deoxy-alpha-D-manno-2-octulosonate-8-phosphate + phosphate</text>
        <dbReference type="Rhea" id="RHEA:14053"/>
        <dbReference type="ChEBI" id="CHEBI:15377"/>
        <dbReference type="ChEBI" id="CHEBI:43474"/>
        <dbReference type="ChEBI" id="CHEBI:57693"/>
        <dbReference type="ChEBI" id="CHEBI:58702"/>
        <dbReference type="ChEBI" id="CHEBI:85985"/>
        <dbReference type="EC" id="2.5.1.55"/>
    </reaction>
</comment>
<comment type="pathway">
    <text evidence="1">Carbohydrate biosynthesis; 3-deoxy-D-manno-octulosonate biosynthesis; 3-deoxy-D-manno-octulosonate from D-ribulose 5-phosphate: step 2/3.</text>
</comment>
<comment type="pathway">
    <text evidence="1">Bacterial outer membrane biogenesis; lipopolysaccharide biosynthesis.</text>
</comment>
<comment type="subcellular location">
    <subcellularLocation>
        <location evidence="1">Cytoplasm</location>
    </subcellularLocation>
</comment>
<comment type="similarity">
    <text evidence="1">Belongs to the KdsA family.</text>
</comment>
<dbReference type="EC" id="2.5.1.55" evidence="1"/>
<dbReference type="EMBL" id="CP000857">
    <property type="protein sequence ID" value="ACN46095.1"/>
    <property type="molecule type" value="Genomic_DNA"/>
</dbReference>
<dbReference type="RefSeq" id="WP_000811046.1">
    <property type="nucleotide sequence ID" value="NC_012125.1"/>
</dbReference>
<dbReference type="SMR" id="C0Q363"/>
<dbReference type="KEGG" id="sei:SPC_1959"/>
<dbReference type="HOGENOM" id="CLU_036666_0_0_6"/>
<dbReference type="UniPathway" id="UPA00030"/>
<dbReference type="UniPathway" id="UPA00357">
    <property type="reaction ID" value="UER00474"/>
</dbReference>
<dbReference type="Proteomes" id="UP000001599">
    <property type="component" value="Chromosome"/>
</dbReference>
<dbReference type="GO" id="GO:0005737">
    <property type="term" value="C:cytoplasm"/>
    <property type="evidence" value="ECO:0007669"/>
    <property type="project" value="UniProtKB-SubCell"/>
</dbReference>
<dbReference type="GO" id="GO:0008676">
    <property type="term" value="F:3-deoxy-8-phosphooctulonate synthase activity"/>
    <property type="evidence" value="ECO:0007669"/>
    <property type="project" value="UniProtKB-UniRule"/>
</dbReference>
<dbReference type="GO" id="GO:0019294">
    <property type="term" value="P:keto-3-deoxy-D-manno-octulosonic acid biosynthetic process"/>
    <property type="evidence" value="ECO:0007669"/>
    <property type="project" value="UniProtKB-UniRule"/>
</dbReference>
<dbReference type="FunFam" id="3.20.20.70:FF:000058">
    <property type="entry name" value="2-dehydro-3-deoxyphosphooctonate aldolase"/>
    <property type="match status" value="1"/>
</dbReference>
<dbReference type="Gene3D" id="3.20.20.70">
    <property type="entry name" value="Aldolase class I"/>
    <property type="match status" value="1"/>
</dbReference>
<dbReference type="HAMAP" id="MF_00056">
    <property type="entry name" value="KDO8P_synth"/>
    <property type="match status" value="1"/>
</dbReference>
<dbReference type="InterPro" id="IPR013785">
    <property type="entry name" value="Aldolase_TIM"/>
</dbReference>
<dbReference type="InterPro" id="IPR006218">
    <property type="entry name" value="DAHP1/KDSA"/>
</dbReference>
<dbReference type="InterPro" id="IPR006269">
    <property type="entry name" value="KDO8P_synthase"/>
</dbReference>
<dbReference type="NCBIfam" id="TIGR01362">
    <property type="entry name" value="KDO8P_synth"/>
    <property type="match status" value="1"/>
</dbReference>
<dbReference type="NCBIfam" id="NF003543">
    <property type="entry name" value="PRK05198.1"/>
    <property type="match status" value="1"/>
</dbReference>
<dbReference type="NCBIfam" id="NF009109">
    <property type="entry name" value="PRK12457.1"/>
    <property type="match status" value="1"/>
</dbReference>
<dbReference type="PANTHER" id="PTHR21057">
    <property type="entry name" value="PHOSPHO-2-DEHYDRO-3-DEOXYHEPTONATE ALDOLASE"/>
    <property type="match status" value="1"/>
</dbReference>
<dbReference type="Pfam" id="PF00793">
    <property type="entry name" value="DAHP_synth_1"/>
    <property type="match status" value="1"/>
</dbReference>
<dbReference type="SUPFAM" id="SSF51569">
    <property type="entry name" value="Aldolase"/>
    <property type="match status" value="1"/>
</dbReference>
<gene>
    <name evidence="1" type="primary">kdsA</name>
    <name type="ordered locus">SPC_1959</name>
</gene>
<name>KDSA_SALPC</name>
<accession>C0Q363</accession>
<protein>
    <recommendedName>
        <fullName evidence="1">2-dehydro-3-deoxyphosphooctonate aldolase</fullName>
        <ecNumber evidence="1">2.5.1.55</ecNumber>
    </recommendedName>
    <alternativeName>
        <fullName evidence="1">3-deoxy-D-manno-octulosonic acid 8-phosphate synthase</fullName>
    </alternativeName>
    <alternativeName>
        <fullName evidence="1">KDO-8-phosphate synthase</fullName>
        <shortName evidence="1">KDO 8-P synthase</shortName>
        <shortName evidence="1">KDOPS</shortName>
    </alternativeName>
    <alternativeName>
        <fullName evidence="1">Phospho-2-dehydro-3-deoxyoctonate aldolase</fullName>
    </alternativeName>
</protein>
<evidence type="ECO:0000255" key="1">
    <source>
        <dbReference type="HAMAP-Rule" id="MF_00056"/>
    </source>
</evidence>
<keyword id="KW-0963">Cytoplasm</keyword>
<keyword id="KW-0448">Lipopolysaccharide biosynthesis</keyword>
<keyword id="KW-0808">Transferase</keyword>
<sequence length="284" mass="30795">MKQKVVNIGDIKVANDLPFVLFGGMNVLESRDLAMRICEHYVTVTQKLGIPYVFKASFDKANRSSIHSYRGPGLEEGMKIFQELKQTFGVKVITDVHEASQAQPVADVVDVIQLPAFLARQTDLVEAMAKTGAVINVKKPQFVSPGQMGNIVDKFHEGGNDKVILCDRGANFGYDNLVVDMLGFSVMKKVSGNSPVIFDVTHALQCRDPFGAASGGRRGQVTELARAGMAVGLAGLFLESHPDPANAKCDGPSALPLAKLEQFLTQIKAIDDLVKSFDELDTEN</sequence>
<proteinExistence type="inferred from homology"/>
<organism>
    <name type="scientific">Salmonella paratyphi C (strain RKS4594)</name>
    <dbReference type="NCBI Taxonomy" id="476213"/>
    <lineage>
        <taxon>Bacteria</taxon>
        <taxon>Pseudomonadati</taxon>
        <taxon>Pseudomonadota</taxon>
        <taxon>Gammaproteobacteria</taxon>
        <taxon>Enterobacterales</taxon>
        <taxon>Enterobacteriaceae</taxon>
        <taxon>Salmonella</taxon>
    </lineage>
</organism>